<evidence type="ECO:0000250" key="1"/>
<evidence type="ECO:0000255" key="2"/>
<evidence type="ECO:0000303" key="3">
    <source>
    </source>
</evidence>
<evidence type="ECO:0000305" key="4"/>
<proteinExistence type="inferred from homology"/>
<organism>
    <name type="scientific">Californiconus californicus</name>
    <name type="common">California cone</name>
    <name type="synonym">Conus californicus</name>
    <dbReference type="NCBI Taxonomy" id="1736779"/>
    <lineage>
        <taxon>Eukaryota</taxon>
        <taxon>Metazoa</taxon>
        <taxon>Spiralia</taxon>
        <taxon>Lophotrochozoa</taxon>
        <taxon>Mollusca</taxon>
        <taxon>Gastropoda</taxon>
        <taxon>Caenogastropoda</taxon>
        <taxon>Neogastropoda</taxon>
        <taxon>Conoidea</taxon>
        <taxon>Conidae</taxon>
        <taxon>Californiconus</taxon>
    </lineage>
</organism>
<comment type="subcellular location">
    <subcellularLocation>
        <location evidence="1">Secreted</location>
    </subcellularLocation>
</comment>
<comment type="tissue specificity">
    <text>Expressed by the venom duct.</text>
</comment>
<comment type="domain">
    <text>The cysteine framework is IX (C-C-C-C-C-C).</text>
</comment>
<protein>
    <recommendedName>
        <fullName evidence="3">Conotoxin Cl9.5</fullName>
    </recommendedName>
    <alternativeName>
        <fullName evidence="4">Cal9.2f</fullName>
    </alternativeName>
</protein>
<name>CU95_CONCL</name>
<feature type="signal peptide" evidence="2">
    <location>
        <begin position="1"/>
        <end position="23"/>
    </location>
</feature>
<feature type="propeptide" id="PRO_0000415045" evidence="1">
    <location>
        <begin position="24"/>
        <end position="37"/>
    </location>
</feature>
<feature type="peptide" id="PRO_0000415046" description="Conotoxin Cl9.5">
    <location>
        <begin position="39"/>
        <end position="80"/>
    </location>
</feature>
<feature type="disulfide bond" evidence="1">
    <location>
        <begin position="42"/>
        <end position="59"/>
    </location>
</feature>
<feature type="disulfide bond" evidence="1">
    <location>
        <begin position="47"/>
        <end position="69"/>
    </location>
</feature>
<feature type="disulfide bond" evidence="1">
    <location>
        <begin position="49"/>
        <end position="74"/>
    </location>
</feature>
<reference key="1">
    <citation type="journal article" date="2010" name="Mol. Phylogenet. Evol.">
        <title>Evolution of Conus peptide toxins: analysis of Conus californicus Reeve, 1844.</title>
        <authorList>
            <person name="Biggs J.S."/>
            <person name="Watkins M."/>
            <person name="Puillandre N."/>
            <person name="Ownby J.P."/>
            <person name="Lopez-Vera E."/>
            <person name="Christensen S."/>
            <person name="Moreno K.J."/>
            <person name="Bernaldez J."/>
            <person name="Licea-Navarro A."/>
            <person name="Corneli P.S."/>
            <person name="Olivera B.M."/>
        </authorList>
    </citation>
    <scope>NUCLEOTIDE SEQUENCE [GENOMIC DNA]</scope>
</reference>
<keyword id="KW-1015">Disulfide bond</keyword>
<keyword id="KW-0528">Neurotoxin</keyword>
<keyword id="KW-0964">Secreted</keyword>
<keyword id="KW-0732">Signal</keyword>
<keyword id="KW-0800">Toxin</keyword>
<accession>D6C4M2</accession>
<sequence>MNCYLILTVALLLTSAMTGTTTAGQLNTKGVTLREDDRTFPCSSGLCACLPLDSYSYICLSPSSSTANCENDECISEDDW</sequence>
<dbReference type="EMBL" id="FJ959164">
    <property type="protein sequence ID" value="ADB93134.1"/>
    <property type="molecule type" value="Genomic_DNA"/>
</dbReference>
<dbReference type="GO" id="GO:0005576">
    <property type="term" value="C:extracellular region"/>
    <property type="evidence" value="ECO:0007669"/>
    <property type="project" value="UniProtKB-SubCell"/>
</dbReference>
<dbReference type="GO" id="GO:0090729">
    <property type="term" value="F:toxin activity"/>
    <property type="evidence" value="ECO:0007669"/>
    <property type="project" value="UniProtKB-KW"/>
</dbReference>